<gene>
    <name type="primary">NUDC</name>
    <name type="ORF">RCJMB04_24m10</name>
</gene>
<reference key="1">
    <citation type="journal article" date="2005" name="Genome Biol.">
        <title>Full-length cDNAs from chicken bursal lymphocytes to facilitate gene function analysis.</title>
        <authorList>
            <person name="Caldwell R.B."/>
            <person name="Kierzek A.M."/>
            <person name="Arakawa H."/>
            <person name="Bezzubov Y."/>
            <person name="Zaim J."/>
            <person name="Fiedler P."/>
            <person name="Kutter S."/>
            <person name="Blagodatski A."/>
            <person name="Kostovska D."/>
            <person name="Koter M."/>
            <person name="Plachy J."/>
            <person name="Carninci P."/>
            <person name="Hayashizaki Y."/>
            <person name="Buerstedde J.-M."/>
        </authorList>
    </citation>
    <scope>NUCLEOTIDE SEQUENCE [LARGE SCALE MRNA]</scope>
    <source>
        <strain>CB</strain>
        <tissue>Bursa of Fabricius</tissue>
    </source>
</reference>
<keyword id="KW-0131">Cell cycle</keyword>
<keyword id="KW-0132">Cell division</keyword>
<keyword id="KW-0175">Coiled coil</keyword>
<keyword id="KW-0963">Cytoplasm</keyword>
<keyword id="KW-0206">Cytoskeleton</keyword>
<keyword id="KW-0493">Microtubule</keyword>
<keyword id="KW-0498">Mitosis</keyword>
<keyword id="KW-0597">Phosphoprotein</keyword>
<keyword id="KW-1185">Reference proteome</keyword>
<name>NUDC_CHICK</name>
<accession>Q5ZIN1</accession>
<proteinExistence type="evidence at transcript level"/>
<comment type="function">
    <text evidence="2 3">Plays a role in neurogenesis and neuronal migration. Necessary for correct formation of mitotic spindles and chromosome separation during mitosis. Necessary for cytokinesis and cell proliferation (By similarity).</text>
</comment>
<comment type="subcellular location">
    <subcellularLocation>
        <location evidence="1">Cytoplasm</location>
        <location evidence="1">Cytoskeleton</location>
    </subcellularLocation>
    <subcellularLocation>
        <location evidence="3">Cytoplasm</location>
        <location evidence="3">Cytoskeleton</location>
        <location evidence="3">Spindle</location>
    </subcellularLocation>
    <subcellularLocation>
        <location evidence="3">Midbody</location>
    </subcellularLocation>
    <text evidence="3">In a filamentous pattern adjacent to the nucleus of migrating cerebellar granule cells. Colocalizes with tubulin and dynein and with the microtubule organizing center. Distributed throughout the cytoplasm of non-migrating cells (By similarity). Localizes to the mitotic spindle in a EML4-dependent manner (By similarity).</text>
</comment>
<comment type="PTM">
    <text evidence="3">Reversibly phosphorylated on serine residues during the M phase of the cell cycle. Phosphorylation is necessary for correct formation of mitotic spindles and chromosome separation during mitosis (By similarity).</text>
</comment>
<comment type="similarity">
    <text evidence="7">Belongs to the nudC family.</text>
</comment>
<sequence length="341" mass="39210">MGLSAEEAAEQEDRFDGILLAMAQQHQGGVCELVNTFFSFLRRKTDFFTGGEDGVAEKLITDSFNHHNKLAQKERKEKKARQEAERREKAERAAKLAKEAKQEANEPRIKELTDEEAERLQLEIDQKKEAQKEVNNVPVKSSEDDGDSSDSNKQETDDEEKDENDKGKLKPNAGNGADLPNYRWTQTLSELDLAIPFKVTFRLKGKDVVVDIQRRRLRVGLKGHPPVIDGELFNEVKVEESSWLIEDGKTVTVHLEKINKMEWWNKLVSTDPEINTKKINPENSKLSDLDSETRSMVEKMMYDQRQKSMGLPTSDEQKKQDILKKFMEQHPEMDFSKAKFN</sequence>
<feature type="chain" id="PRO_0000057988" description="Nuclear migration protein nudC">
    <location>
        <begin position="1"/>
        <end position="341"/>
    </location>
</feature>
<feature type="domain" description="CS" evidence="5">
    <location>
        <begin position="177"/>
        <end position="268"/>
    </location>
</feature>
<feature type="region of interest" description="Disordered" evidence="6">
    <location>
        <begin position="66"/>
        <end position="181"/>
    </location>
</feature>
<feature type="coiled-coil region" evidence="4">
    <location>
        <begin position="65"/>
        <end position="137"/>
    </location>
</feature>
<feature type="short sequence motif" description="Nuclear localization signal" evidence="4">
    <location>
        <begin position="73"/>
        <end position="81"/>
    </location>
</feature>
<feature type="compositionally biased region" description="Basic and acidic residues" evidence="6">
    <location>
        <begin position="71"/>
        <end position="132"/>
    </location>
</feature>
<feature type="modified residue" description="Phosphoserine" evidence="3">
    <location>
        <position position="284"/>
    </location>
</feature>
<feature type="modified residue" description="Phosphoserine" evidence="3">
    <location>
        <position position="336"/>
    </location>
</feature>
<protein>
    <recommendedName>
        <fullName>Nuclear migration protein nudC</fullName>
    </recommendedName>
    <alternativeName>
        <fullName>Nuclear distribution protein C homolog</fullName>
    </alternativeName>
</protein>
<organism>
    <name type="scientific">Gallus gallus</name>
    <name type="common">Chicken</name>
    <dbReference type="NCBI Taxonomy" id="9031"/>
    <lineage>
        <taxon>Eukaryota</taxon>
        <taxon>Metazoa</taxon>
        <taxon>Chordata</taxon>
        <taxon>Craniata</taxon>
        <taxon>Vertebrata</taxon>
        <taxon>Euteleostomi</taxon>
        <taxon>Archelosauria</taxon>
        <taxon>Archosauria</taxon>
        <taxon>Dinosauria</taxon>
        <taxon>Saurischia</taxon>
        <taxon>Theropoda</taxon>
        <taxon>Coelurosauria</taxon>
        <taxon>Aves</taxon>
        <taxon>Neognathae</taxon>
        <taxon>Galloanserae</taxon>
        <taxon>Galliformes</taxon>
        <taxon>Phasianidae</taxon>
        <taxon>Phasianinae</taxon>
        <taxon>Gallus</taxon>
    </lineage>
</organism>
<evidence type="ECO:0000250" key="1"/>
<evidence type="ECO:0000250" key="2">
    <source>
        <dbReference type="UniProtKB" id="O35685"/>
    </source>
</evidence>
<evidence type="ECO:0000250" key="3">
    <source>
        <dbReference type="UniProtKB" id="Q9Y266"/>
    </source>
</evidence>
<evidence type="ECO:0000255" key="4"/>
<evidence type="ECO:0000255" key="5">
    <source>
        <dbReference type="PROSITE-ProRule" id="PRU00547"/>
    </source>
</evidence>
<evidence type="ECO:0000256" key="6">
    <source>
        <dbReference type="SAM" id="MobiDB-lite"/>
    </source>
</evidence>
<evidence type="ECO:0000305" key="7"/>
<dbReference type="EMBL" id="AJ720753">
    <property type="protein sequence ID" value="CAG32412.1"/>
    <property type="molecule type" value="mRNA"/>
</dbReference>
<dbReference type="RefSeq" id="NP_001006311.1">
    <property type="nucleotide sequence ID" value="NM_001006311.2"/>
</dbReference>
<dbReference type="SMR" id="Q5ZIN1"/>
<dbReference type="FunCoup" id="Q5ZIN1">
    <property type="interactions" value="2544"/>
</dbReference>
<dbReference type="STRING" id="9031.ENSGALP00000001315"/>
<dbReference type="PaxDb" id="9031-ENSGALP00000001315"/>
<dbReference type="GeneID" id="419578"/>
<dbReference type="KEGG" id="gga:419578"/>
<dbReference type="CTD" id="10726"/>
<dbReference type="VEuPathDB" id="HostDB:geneid_419578"/>
<dbReference type="eggNOG" id="KOG2265">
    <property type="taxonomic scope" value="Eukaryota"/>
</dbReference>
<dbReference type="InParanoid" id="Q5ZIN1"/>
<dbReference type="OMA" id="NQMEWWS"/>
<dbReference type="OrthoDB" id="416217at2759"/>
<dbReference type="PhylomeDB" id="Q5ZIN1"/>
<dbReference type="PRO" id="PR:Q5ZIN1"/>
<dbReference type="Proteomes" id="UP000000539">
    <property type="component" value="Unassembled WGS sequence"/>
</dbReference>
<dbReference type="GO" id="GO:0005737">
    <property type="term" value="C:cytoplasm"/>
    <property type="evidence" value="ECO:0000318"/>
    <property type="project" value="GO_Central"/>
</dbReference>
<dbReference type="GO" id="GO:0005874">
    <property type="term" value="C:microtubule"/>
    <property type="evidence" value="ECO:0007669"/>
    <property type="project" value="UniProtKB-KW"/>
</dbReference>
<dbReference type="GO" id="GO:0030496">
    <property type="term" value="C:midbody"/>
    <property type="evidence" value="ECO:0000250"/>
    <property type="project" value="UniProtKB"/>
</dbReference>
<dbReference type="GO" id="GO:0072686">
    <property type="term" value="C:mitotic spindle"/>
    <property type="evidence" value="ECO:0000250"/>
    <property type="project" value="UniProtKB"/>
</dbReference>
<dbReference type="GO" id="GO:0051082">
    <property type="term" value="F:unfolded protein binding"/>
    <property type="evidence" value="ECO:0000318"/>
    <property type="project" value="GO_Central"/>
</dbReference>
<dbReference type="GO" id="GO:0051301">
    <property type="term" value="P:cell division"/>
    <property type="evidence" value="ECO:0007669"/>
    <property type="project" value="UniProtKB-KW"/>
</dbReference>
<dbReference type="GO" id="GO:0007080">
    <property type="term" value="P:mitotic metaphase chromosome alignment"/>
    <property type="evidence" value="ECO:0000250"/>
    <property type="project" value="UniProtKB"/>
</dbReference>
<dbReference type="GO" id="GO:0007052">
    <property type="term" value="P:mitotic spindle organization"/>
    <property type="evidence" value="ECO:0000250"/>
    <property type="project" value="UniProtKB"/>
</dbReference>
<dbReference type="GO" id="GO:0006457">
    <property type="term" value="P:protein folding"/>
    <property type="evidence" value="ECO:0000318"/>
    <property type="project" value="GO_Central"/>
</dbReference>
<dbReference type="CDD" id="cd06492">
    <property type="entry name" value="p23_mNUDC_like"/>
    <property type="match status" value="1"/>
</dbReference>
<dbReference type="FunFam" id="2.60.40.790:FF:000001">
    <property type="entry name" value="Nuclear migration protein nudC"/>
    <property type="match status" value="1"/>
</dbReference>
<dbReference type="Gene3D" id="2.60.40.790">
    <property type="match status" value="1"/>
</dbReference>
<dbReference type="InterPro" id="IPR007052">
    <property type="entry name" value="CS_dom"/>
</dbReference>
<dbReference type="InterPro" id="IPR008978">
    <property type="entry name" value="HSP20-like_chaperone"/>
</dbReference>
<dbReference type="InterPro" id="IPR032572">
    <property type="entry name" value="NuDC"/>
</dbReference>
<dbReference type="InterPro" id="IPR037898">
    <property type="entry name" value="NudC_fam"/>
</dbReference>
<dbReference type="InterPro" id="IPR025934">
    <property type="entry name" value="NudC_N_dom"/>
</dbReference>
<dbReference type="PANTHER" id="PTHR12356:SF3">
    <property type="entry name" value="NUCLEAR MIGRATION PROTEIN NUDC"/>
    <property type="match status" value="1"/>
</dbReference>
<dbReference type="PANTHER" id="PTHR12356">
    <property type="entry name" value="NUCLEAR MOVEMENT PROTEIN NUDC"/>
    <property type="match status" value="1"/>
</dbReference>
<dbReference type="Pfam" id="PF04969">
    <property type="entry name" value="CS"/>
    <property type="match status" value="1"/>
</dbReference>
<dbReference type="Pfam" id="PF16273">
    <property type="entry name" value="NuDC"/>
    <property type="match status" value="1"/>
</dbReference>
<dbReference type="Pfam" id="PF14050">
    <property type="entry name" value="Nudc_N"/>
    <property type="match status" value="1"/>
</dbReference>
<dbReference type="SUPFAM" id="SSF49764">
    <property type="entry name" value="HSP20-like chaperones"/>
    <property type="match status" value="1"/>
</dbReference>
<dbReference type="PROSITE" id="PS51203">
    <property type="entry name" value="CS"/>
    <property type="match status" value="1"/>
</dbReference>